<organism>
    <name type="scientific">Salmonella typhimurium (strain LT2 / SGSC1412 / ATCC 700720)</name>
    <dbReference type="NCBI Taxonomy" id="99287"/>
    <lineage>
        <taxon>Bacteria</taxon>
        <taxon>Pseudomonadati</taxon>
        <taxon>Pseudomonadota</taxon>
        <taxon>Gammaproteobacteria</taxon>
        <taxon>Enterobacterales</taxon>
        <taxon>Enterobacteriaceae</taxon>
        <taxon>Salmonella</taxon>
    </lineage>
</organism>
<gene>
    <name evidence="2" type="primary">htpX</name>
    <name type="ordered locus">STM1844</name>
</gene>
<name>HTPX_SALTY</name>
<dbReference type="EC" id="3.4.24.-" evidence="2"/>
<dbReference type="EMBL" id="AE006468">
    <property type="protein sequence ID" value="AAL20759.1"/>
    <property type="molecule type" value="Genomic_DNA"/>
</dbReference>
<dbReference type="RefSeq" id="NP_460800.1">
    <property type="nucleotide sequence ID" value="NC_003197.2"/>
</dbReference>
<dbReference type="RefSeq" id="WP_000984498.1">
    <property type="nucleotide sequence ID" value="NC_003197.2"/>
</dbReference>
<dbReference type="SMR" id="P65817"/>
<dbReference type="STRING" id="99287.STM1844"/>
<dbReference type="MEROPS" id="M48.002"/>
<dbReference type="PaxDb" id="99287-STM1844"/>
<dbReference type="GeneID" id="1253363"/>
<dbReference type="GeneID" id="66756319"/>
<dbReference type="KEGG" id="stm:STM1844"/>
<dbReference type="PATRIC" id="fig|99287.12.peg.1946"/>
<dbReference type="HOGENOM" id="CLU_042266_1_0_6"/>
<dbReference type="OMA" id="AVCCTEG"/>
<dbReference type="PhylomeDB" id="P65817"/>
<dbReference type="BioCyc" id="SENT99287:STM1844-MONOMER"/>
<dbReference type="Proteomes" id="UP000001014">
    <property type="component" value="Chromosome"/>
</dbReference>
<dbReference type="GO" id="GO:0005886">
    <property type="term" value="C:plasma membrane"/>
    <property type="evidence" value="ECO:0007669"/>
    <property type="project" value="UniProtKB-SubCell"/>
</dbReference>
<dbReference type="GO" id="GO:0004222">
    <property type="term" value="F:metalloendopeptidase activity"/>
    <property type="evidence" value="ECO:0007669"/>
    <property type="project" value="UniProtKB-UniRule"/>
</dbReference>
<dbReference type="GO" id="GO:0008270">
    <property type="term" value="F:zinc ion binding"/>
    <property type="evidence" value="ECO:0007669"/>
    <property type="project" value="UniProtKB-UniRule"/>
</dbReference>
<dbReference type="GO" id="GO:0006508">
    <property type="term" value="P:proteolysis"/>
    <property type="evidence" value="ECO:0007669"/>
    <property type="project" value="UniProtKB-KW"/>
</dbReference>
<dbReference type="CDD" id="cd07335">
    <property type="entry name" value="M48B_HtpX_like"/>
    <property type="match status" value="1"/>
</dbReference>
<dbReference type="FunFam" id="3.30.2010.10:FF:000001">
    <property type="entry name" value="Protease HtpX"/>
    <property type="match status" value="1"/>
</dbReference>
<dbReference type="Gene3D" id="3.30.2010.10">
    <property type="entry name" value="Metalloproteases ('zincins'), catalytic domain"/>
    <property type="match status" value="1"/>
</dbReference>
<dbReference type="HAMAP" id="MF_00188">
    <property type="entry name" value="Pept_M48_protease_HtpX"/>
    <property type="match status" value="1"/>
</dbReference>
<dbReference type="InterPro" id="IPR050083">
    <property type="entry name" value="HtpX_protease"/>
</dbReference>
<dbReference type="InterPro" id="IPR022919">
    <property type="entry name" value="Pept_M48_protease_HtpX"/>
</dbReference>
<dbReference type="InterPro" id="IPR001915">
    <property type="entry name" value="Peptidase_M48"/>
</dbReference>
<dbReference type="NCBIfam" id="NF003965">
    <property type="entry name" value="PRK05457.1"/>
    <property type="match status" value="1"/>
</dbReference>
<dbReference type="PANTHER" id="PTHR43221">
    <property type="entry name" value="PROTEASE HTPX"/>
    <property type="match status" value="1"/>
</dbReference>
<dbReference type="PANTHER" id="PTHR43221:SF1">
    <property type="entry name" value="PROTEASE HTPX"/>
    <property type="match status" value="1"/>
</dbReference>
<dbReference type="Pfam" id="PF01435">
    <property type="entry name" value="Peptidase_M48"/>
    <property type="match status" value="1"/>
</dbReference>
<proteinExistence type="inferred from homology"/>
<reference key="1">
    <citation type="journal article" date="2001" name="Nature">
        <title>Complete genome sequence of Salmonella enterica serovar Typhimurium LT2.</title>
        <authorList>
            <person name="McClelland M."/>
            <person name="Sanderson K.E."/>
            <person name="Spieth J."/>
            <person name="Clifton S.W."/>
            <person name="Latreille P."/>
            <person name="Courtney L."/>
            <person name="Porwollik S."/>
            <person name="Ali J."/>
            <person name="Dante M."/>
            <person name="Du F."/>
            <person name="Hou S."/>
            <person name="Layman D."/>
            <person name="Leonard S."/>
            <person name="Nguyen C."/>
            <person name="Scott K."/>
            <person name="Holmes A."/>
            <person name="Grewal N."/>
            <person name="Mulvaney E."/>
            <person name="Ryan E."/>
            <person name="Sun H."/>
            <person name="Florea L."/>
            <person name="Miller W."/>
            <person name="Stoneking T."/>
            <person name="Nhan M."/>
            <person name="Waterston R."/>
            <person name="Wilson R.K."/>
        </authorList>
    </citation>
    <scope>NUCLEOTIDE SEQUENCE [LARGE SCALE GENOMIC DNA]</scope>
    <source>
        <strain>LT2 / SGSC1412 / ATCC 700720</strain>
    </source>
</reference>
<evidence type="ECO:0000255" key="1"/>
<evidence type="ECO:0000255" key="2">
    <source>
        <dbReference type="HAMAP-Rule" id="MF_00188"/>
    </source>
</evidence>
<accession>P65817</accession>
<accession>Q8XEZ3</accession>
<sequence length="293" mass="31879">MMRIALFLLTNLAVMVVFGLVLSLTGIQSSSVQGLLIMALLFGFGGSFISLLMSKWMALKSVGGEVIEQPRNERERWLMNTVATQARQAGIAMPQVAIYHAPDINAFATGARRDASLVAVSTGLLQNMSPDEAEAVIAHEISHIANGDMVTMTLIQGVVNTFVIFISRIIAQIAAGFLGGNRDEGEGSNGNPLIYFAVATVLELVFGILASIITMWFSRYREFHADAGSAKLVGREKMIAALQRLKTSYEPQEATSMMAFCINGKSKSLSELFMTHPPLDKRIEALRSGEYLK</sequence>
<comment type="cofactor">
    <cofactor evidence="2">
        <name>Zn(2+)</name>
        <dbReference type="ChEBI" id="CHEBI:29105"/>
    </cofactor>
    <text evidence="2">Binds 1 zinc ion per subunit.</text>
</comment>
<comment type="subcellular location">
    <subcellularLocation>
        <location evidence="2">Cell inner membrane</location>
        <topology evidence="2">Multi-pass membrane protein</topology>
    </subcellularLocation>
</comment>
<comment type="similarity">
    <text evidence="2">Belongs to the peptidase M48B family.</text>
</comment>
<keyword id="KW-0997">Cell inner membrane</keyword>
<keyword id="KW-1003">Cell membrane</keyword>
<keyword id="KW-0378">Hydrolase</keyword>
<keyword id="KW-0472">Membrane</keyword>
<keyword id="KW-0479">Metal-binding</keyword>
<keyword id="KW-0482">Metalloprotease</keyword>
<keyword id="KW-0645">Protease</keyword>
<keyword id="KW-1185">Reference proteome</keyword>
<keyword id="KW-0812">Transmembrane</keyword>
<keyword id="KW-1133">Transmembrane helix</keyword>
<keyword id="KW-0862">Zinc</keyword>
<feature type="chain" id="PRO_0000138886" description="Protease HtpX">
    <location>
        <begin position="1"/>
        <end position="293"/>
    </location>
</feature>
<feature type="topological domain" description="Cytoplasmic" evidence="1">
    <location>
        <begin position="1"/>
        <end position="3"/>
    </location>
</feature>
<feature type="transmembrane region" description="Helical" evidence="2">
    <location>
        <begin position="4"/>
        <end position="24"/>
    </location>
</feature>
<feature type="topological domain" description="Periplasmic" evidence="1">
    <location>
        <begin position="25"/>
        <end position="33"/>
    </location>
</feature>
<feature type="transmembrane region" description="Helical" evidence="2">
    <location>
        <begin position="34"/>
        <end position="54"/>
    </location>
</feature>
<feature type="topological domain" description="Cytoplasmic" evidence="1">
    <location>
        <begin position="55"/>
        <end position="157"/>
    </location>
</feature>
<feature type="transmembrane region" description="Helical" evidence="2">
    <location>
        <begin position="158"/>
        <end position="178"/>
    </location>
</feature>
<feature type="topological domain" description="Periplasmic" evidence="1">
    <location>
        <begin position="179"/>
        <end position="192"/>
    </location>
</feature>
<feature type="transmembrane region" description="Helical" evidence="2">
    <location>
        <begin position="193"/>
        <end position="213"/>
    </location>
</feature>
<feature type="topological domain" description="Cytoplasmic" evidence="1">
    <location>
        <begin position="214"/>
        <end position="293"/>
    </location>
</feature>
<feature type="active site" evidence="2">
    <location>
        <position position="140"/>
    </location>
</feature>
<feature type="binding site" evidence="2">
    <location>
        <position position="139"/>
    </location>
    <ligand>
        <name>Zn(2+)</name>
        <dbReference type="ChEBI" id="CHEBI:29105"/>
        <note>catalytic</note>
    </ligand>
</feature>
<feature type="binding site" evidence="2">
    <location>
        <position position="143"/>
    </location>
    <ligand>
        <name>Zn(2+)</name>
        <dbReference type="ChEBI" id="CHEBI:29105"/>
        <note>catalytic</note>
    </ligand>
</feature>
<feature type="binding site" evidence="2">
    <location>
        <position position="222"/>
    </location>
    <ligand>
        <name>Zn(2+)</name>
        <dbReference type="ChEBI" id="CHEBI:29105"/>
        <note>catalytic</note>
    </ligand>
</feature>
<protein>
    <recommendedName>
        <fullName evidence="2">Protease HtpX</fullName>
        <ecNumber evidence="2">3.4.24.-</ecNumber>
    </recommendedName>
    <alternativeName>
        <fullName evidence="2">Heat shock protein HtpX</fullName>
    </alternativeName>
</protein>